<keyword id="KW-0961">Cell wall biogenesis/degradation</keyword>
<keyword id="KW-0963">Cytoplasm</keyword>
<keyword id="KW-1185">Reference proteome</keyword>
<organism>
    <name type="scientific">Arabidopsis thaliana</name>
    <name type="common">Mouse-ear cress</name>
    <dbReference type="NCBI Taxonomy" id="3702"/>
    <lineage>
        <taxon>Eukaryota</taxon>
        <taxon>Viridiplantae</taxon>
        <taxon>Streptophyta</taxon>
        <taxon>Embryophyta</taxon>
        <taxon>Tracheophyta</taxon>
        <taxon>Spermatophyta</taxon>
        <taxon>Magnoliopsida</taxon>
        <taxon>eudicotyledons</taxon>
        <taxon>Gunneridae</taxon>
        <taxon>Pentapetalae</taxon>
        <taxon>rosids</taxon>
        <taxon>malvids</taxon>
        <taxon>Brassicales</taxon>
        <taxon>Brassicaceae</taxon>
        <taxon>Camelineae</taxon>
        <taxon>Arabidopsis</taxon>
    </lineage>
</organism>
<evidence type="ECO:0000256" key="1">
    <source>
        <dbReference type="SAM" id="MobiDB-lite"/>
    </source>
</evidence>
<evidence type="ECO:0000269" key="2">
    <source>
    </source>
</evidence>
<evidence type="ECO:0000269" key="3">
    <source>
    </source>
</evidence>
<evidence type="ECO:0000305" key="4"/>
<protein>
    <recommendedName>
        <fullName>Protein ECERIFERUM 26</fullName>
    </recommendedName>
    <alternativeName>
        <fullName>CER2-like protein 1</fullName>
        <shortName>CER2-like1</shortName>
    </alternativeName>
</protein>
<gene>
    <name type="primary">CER26</name>
    <name type="ordered locus">At4g13840</name>
    <name type="ORF">F18A5.230</name>
</gene>
<reference key="1">
    <citation type="journal article" date="1999" name="Nature">
        <title>Sequence and analysis of chromosome 4 of the plant Arabidopsis thaliana.</title>
        <authorList>
            <person name="Mayer K.F.X."/>
            <person name="Schueller C."/>
            <person name="Wambutt R."/>
            <person name="Murphy G."/>
            <person name="Volckaert G."/>
            <person name="Pohl T."/>
            <person name="Duesterhoeft A."/>
            <person name="Stiekema W."/>
            <person name="Entian K.-D."/>
            <person name="Terryn N."/>
            <person name="Harris B."/>
            <person name="Ansorge W."/>
            <person name="Brandt P."/>
            <person name="Grivell L.A."/>
            <person name="Rieger M."/>
            <person name="Weichselgartner M."/>
            <person name="de Simone V."/>
            <person name="Obermaier B."/>
            <person name="Mache R."/>
            <person name="Mueller M."/>
            <person name="Kreis M."/>
            <person name="Delseny M."/>
            <person name="Puigdomenech P."/>
            <person name="Watson M."/>
            <person name="Schmidtheini T."/>
            <person name="Reichert B."/>
            <person name="Portetelle D."/>
            <person name="Perez-Alonso M."/>
            <person name="Boutry M."/>
            <person name="Bancroft I."/>
            <person name="Vos P."/>
            <person name="Hoheisel J."/>
            <person name="Zimmermann W."/>
            <person name="Wedler H."/>
            <person name="Ridley P."/>
            <person name="Langham S.-A."/>
            <person name="McCullagh B."/>
            <person name="Bilham L."/>
            <person name="Robben J."/>
            <person name="van der Schueren J."/>
            <person name="Grymonprez B."/>
            <person name="Chuang Y.-J."/>
            <person name="Vandenbussche F."/>
            <person name="Braeken M."/>
            <person name="Weltjens I."/>
            <person name="Voet M."/>
            <person name="Bastiaens I."/>
            <person name="Aert R."/>
            <person name="Defoor E."/>
            <person name="Weitzenegger T."/>
            <person name="Bothe G."/>
            <person name="Ramsperger U."/>
            <person name="Hilbert H."/>
            <person name="Braun M."/>
            <person name="Holzer E."/>
            <person name="Brandt A."/>
            <person name="Peters S."/>
            <person name="van Staveren M."/>
            <person name="Dirkse W."/>
            <person name="Mooijman P."/>
            <person name="Klein Lankhorst R."/>
            <person name="Rose M."/>
            <person name="Hauf J."/>
            <person name="Koetter P."/>
            <person name="Berneiser S."/>
            <person name="Hempel S."/>
            <person name="Feldpausch M."/>
            <person name="Lamberth S."/>
            <person name="Van den Daele H."/>
            <person name="De Keyser A."/>
            <person name="Buysshaert C."/>
            <person name="Gielen J."/>
            <person name="Villarroel R."/>
            <person name="De Clercq R."/>
            <person name="van Montagu M."/>
            <person name="Rogers J."/>
            <person name="Cronin A."/>
            <person name="Quail M.A."/>
            <person name="Bray-Allen S."/>
            <person name="Clark L."/>
            <person name="Doggett J."/>
            <person name="Hall S."/>
            <person name="Kay M."/>
            <person name="Lennard N."/>
            <person name="McLay K."/>
            <person name="Mayes R."/>
            <person name="Pettett A."/>
            <person name="Rajandream M.A."/>
            <person name="Lyne M."/>
            <person name="Benes V."/>
            <person name="Rechmann S."/>
            <person name="Borkova D."/>
            <person name="Bloecker H."/>
            <person name="Scharfe M."/>
            <person name="Grimm M."/>
            <person name="Loehnert T.-H."/>
            <person name="Dose S."/>
            <person name="de Haan M."/>
            <person name="Maarse A.C."/>
            <person name="Schaefer M."/>
            <person name="Mueller-Auer S."/>
            <person name="Gabel C."/>
            <person name="Fuchs M."/>
            <person name="Fartmann B."/>
            <person name="Granderath K."/>
            <person name="Dauner D."/>
            <person name="Herzl A."/>
            <person name="Neumann S."/>
            <person name="Argiriou A."/>
            <person name="Vitale D."/>
            <person name="Liguori R."/>
            <person name="Piravandi E."/>
            <person name="Massenet O."/>
            <person name="Quigley F."/>
            <person name="Clabauld G."/>
            <person name="Muendlein A."/>
            <person name="Felber R."/>
            <person name="Schnabl S."/>
            <person name="Hiller R."/>
            <person name="Schmidt W."/>
            <person name="Lecharny A."/>
            <person name="Aubourg S."/>
            <person name="Chefdor F."/>
            <person name="Cooke R."/>
            <person name="Berger C."/>
            <person name="Monfort A."/>
            <person name="Casacuberta E."/>
            <person name="Gibbons T."/>
            <person name="Weber N."/>
            <person name="Vandenbol M."/>
            <person name="Bargues M."/>
            <person name="Terol J."/>
            <person name="Torres A."/>
            <person name="Perez-Perez A."/>
            <person name="Purnelle B."/>
            <person name="Bent E."/>
            <person name="Johnson S."/>
            <person name="Tacon D."/>
            <person name="Jesse T."/>
            <person name="Heijnen L."/>
            <person name="Schwarz S."/>
            <person name="Scholler P."/>
            <person name="Heber S."/>
            <person name="Francs P."/>
            <person name="Bielke C."/>
            <person name="Frishman D."/>
            <person name="Haase D."/>
            <person name="Lemcke K."/>
            <person name="Mewes H.-W."/>
            <person name="Stocker S."/>
            <person name="Zaccaria P."/>
            <person name="Bevan M."/>
            <person name="Wilson R.K."/>
            <person name="de la Bastide M."/>
            <person name="Habermann K."/>
            <person name="Parnell L."/>
            <person name="Dedhia N."/>
            <person name="Gnoj L."/>
            <person name="Schutz K."/>
            <person name="Huang E."/>
            <person name="Spiegel L."/>
            <person name="Sekhon M."/>
            <person name="Murray J."/>
            <person name="Sheet P."/>
            <person name="Cordes M."/>
            <person name="Abu-Threideh J."/>
            <person name="Stoneking T."/>
            <person name="Kalicki J."/>
            <person name="Graves T."/>
            <person name="Harmon G."/>
            <person name="Edwards J."/>
            <person name="Latreille P."/>
            <person name="Courtney L."/>
            <person name="Cloud J."/>
            <person name="Abbott A."/>
            <person name="Scott K."/>
            <person name="Johnson D."/>
            <person name="Minx P."/>
            <person name="Bentley D."/>
            <person name="Fulton B."/>
            <person name="Miller N."/>
            <person name="Greco T."/>
            <person name="Kemp K."/>
            <person name="Kramer J."/>
            <person name="Fulton L."/>
            <person name="Mardis E."/>
            <person name="Dante M."/>
            <person name="Pepin K."/>
            <person name="Hillier L.W."/>
            <person name="Nelson J."/>
            <person name="Spieth J."/>
            <person name="Ryan E."/>
            <person name="Andrews S."/>
            <person name="Geisel C."/>
            <person name="Layman D."/>
            <person name="Du H."/>
            <person name="Ali J."/>
            <person name="Berghoff A."/>
            <person name="Jones K."/>
            <person name="Drone K."/>
            <person name="Cotton M."/>
            <person name="Joshu C."/>
            <person name="Antonoiu B."/>
            <person name="Zidanic M."/>
            <person name="Strong C."/>
            <person name="Sun H."/>
            <person name="Lamar B."/>
            <person name="Yordan C."/>
            <person name="Ma P."/>
            <person name="Zhong J."/>
            <person name="Preston R."/>
            <person name="Vil D."/>
            <person name="Shekher M."/>
            <person name="Matero A."/>
            <person name="Shah R."/>
            <person name="Swaby I.K."/>
            <person name="O'Shaughnessy A."/>
            <person name="Rodriguez M."/>
            <person name="Hoffman J."/>
            <person name="Till S."/>
            <person name="Granat S."/>
            <person name="Shohdy N."/>
            <person name="Hasegawa A."/>
            <person name="Hameed A."/>
            <person name="Lodhi M."/>
            <person name="Johnson A."/>
            <person name="Chen E."/>
            <person name="Marra M.A."/>
            <person name="Martienssen R."/>
            <person name="McCombie W.R."/>
        </authorList>
    </citation>
    <scope>NUCLEOTIDE SEQUENCE [LARGE SCALE GENOMIC DNA]</scope>
    <source>
        <strain>cv. Columbia</strain>
    </source>
</reference>
<reference key="2">
    <citation type="journal article" date="2017" name="Plant J.">
        <title>Araport11: a complete reannotation of the Arabidopsis thaliana reference genome.</title>
        <authorList>
            <person name="Cheng C.Y."/>
            <person name="Krishnakumar V."/>
            <person name="Chan A.P."/>
            <person name="Thibaud-Nissen F."/>
            <person name="Schobel S."/>
            <person name="Town C.D."/>
        </authorList>
    </citation>
    <scope>GENOME REANNOTATION</scope>
    <source>
        <strain>cv. Columbia</strain>
    </source>
</reference>
<reference key="3">
    <citation type="journal article" date="2003" name="Science">
        <title>Empirical analysis of transcriptional activity in the Arabidopsis genome.</title>
        <authorList>
            <person name="Yamada K."/>
            <person name="Lim J."/>
            <person name="Dale J.M."/>
            <person name="Chen H."/>
            <person name="Shinn P."/>
            <person name="Palm C.J."/>
            <person name="Southwick A.M."/>
            <person name="Wu H.C."/>
            <person name="Kim C.J."/>
            <person name="Nguyen M."/>
            <person name="Pham P.K."/>
            <person name="Cheuk R.F."/>
            <person name="Karlin-Newmann G."/>
            <person name="Liu S.X."/>
            <person name="Lam B."/>
            <person name="Sakano H."/>
            <person name="Wu T."/>
            <person name="Yu G."/>
            <person name="Miranda M."/>
            <person name="Quach H.L."/>
            <person name="Tripp M."/>
            <person name="Chang C.H."/>
            <person name="Lee J.M."/>
            <person name="Toriumi M.J."/>
            <person name="Chan M.M."/>
            <person name="Tang C.C."/>
            <person name="Onodera C.S."/>
            <person name="Deng J.M."/>
            <person name="Akiyama K."/>
            <person name="Ansari Y."/>
            <person name="Arakawa T."/>
            <person name="Banh J."/>
            <person name="Banno F."/>
            <person name="Bowser L."/>
            <person name="Brooks S.Y."/>
            <person name="Carninci P."/>
            <person name="Chao Q."/>
            <person name="Choy N."/>
            <person name="Enju A."/>
            <person name="Goldsmith A.D."/>
            <person name="Gurjal M."/>
            <person name="Hansen N.F."/>
            <person name="Hayashizaki Y."/>
            <person name="Johnson-Hopson C."/>
            <person name="Hsuan V.W."/>
            <person name="Iida K."/>
            <person name="Karnes M."/>
            <person name="Khan S."/>
            <person name="Koesema E."/>
            <person name="Ishida J."/>
            <person name="Jiang P.X."/>
            <person name="Jones T."/>
            <person name="Kawai J."/>
            <person name="Kamiya A."/>
            <person name="Meyers C."/>
            <person name="Nakajima M."/>
            <person name="Narusaka M."/>
            <person name="Seki M."/>
            <person name="Sakurai T."/>
            <person name="Satou M."/>
            <person name="Tamse R."/>
            <person name="Vaysberg M."/>
            <person name="Wallender E.K."/>
            <person name="Wong C."/>
            <person name="Yamamura Y."/>
            <person name="Yuan S."/>
            <person name="Shinozaki K."/>
            <person name="Davis R.W."/>
            <person name="Theologis A."/>
            <person name="Ecker J.R."/>
        </authorList>
    </citation>
    <scope>NUCLEOTIDE SEQUENCE [LARGE SCALE MRNA]</scope>
    <source>
        <strain>cv. Columbia</strain>
    </source>
</reference>
<reference key="4">
    <citation type="submission" date="2006-07" db="EMBL/GenBank/DDBJ databases">
        <title>Large-scale analysis of RIKEN Arabidopsis full-length (RAFL) cDNAs.</title>
        <authorList>
            <person name="Totoki Y."/>
            <person name="Seki M."/>
            <person name="Ishida J."/>
            <person name="Nakajima M."/>
            <person name="Enju A."/>
            <person name="Kamiya A."/>
            <person name="Narusaka M."/>
            <person name="Shin-i T."/>
            <person name="Nakagawa M."/>
            <person name="Sakamoto N."/>
            <person name="Oishi K."/>
            <person name="Kohara Y."/>
            <person name="Kobayashi M."/>
            <person name="Toyoda A."/>
            <person name="Sakaki Y."/>
            <person name="Sakurai T."/>
            <person name="Iida K."/>
            <person name="Akiyama K."/>
            <person name="Satou M."/>
            <person name="Toyoda T."/>
            <person name="Konagaya A."/>
            <person name="Carninci P."/>
            <person name="Kawai J."/>
            <person name="Hayashizaki Y."/>
            <person name="Shinozaki K."/>
        </authorList>
    </citation>
    <scope>NUCLEOTIDE SEQUENCE [LARGE SCALE MRNA]</scope>
    <source>
        <strain>cv. Columbia</strain>
    </source>
</reference>
<reference key="5">
    <citation type="journal article" date="2012" name="Plant Physiol.">
        <title>Arabidopsis ECERIFERUM2 is a component of the fatty acid elongation machinery required for fatty acid extension to exceptional lengths.</title>
        <authorList>
            <person name="Haslam T.M."/>
            <person name="Manas-Fernandez A."/>
            <person name="Zhao L."/>
            <person name="Kunst L."/>
        </authorList>
    </citation>
    <scope>FUNCTION</scope>
    <scope>TISSUE SPECIFICITY</scope>
    <scope>DISRUPTION PHENOTYPE</scope>
</reference>
<reference key="6">
    <citation type="journal article" date="2013" name="Plant J.">
        <title>The Arabidopsis cer26 mutant, like the cer2 mutant, is specifically affected in the very long chain fatty acid elongation process.</title>
        <authorList>
            <person name="Pascal S."/>
            <person name="Bernard A."/>
            <person name="Sorel M."/>
            <person name="Pervent M."/>
            <person name="Vile D."/>
            <person name="Haslam R.P."/>
            <person name="Napier J.A."/>
            <person name="Lessire R."/>
            <person name="Domergue F."/>
            <person name="Joubes J."/>
        </authorList>
    </citation>
    <scope>FUNCTION</scope>
    <scope>SUBCELLULAR LOCATION</scope>
    <scope>TISSUE SPECIFICITY</scope>
    <scope>DISRUPTION PHENOTYPE</scope>
</reference>
<dbReference type="EMBL" id="AL035528">
    <property type="protein sequence ID" value="CAB36848.1"/>
    <property type="molecule type" value="Genomic_DNA"/>
</dbReference>
<dbReference type="EMBL" id="AL161537">
    <property type="protein sequence ID" value="CAB78426.1"/>
    <property type="molecule type" value="Genomic_DNA"/>
</dbReference>
<dbReference type="EMBL" id="CP002687">
    <property type="protein sequence ID" value="AEE83332.1"/>
    <property type="molecule type" value="Genomic_DNA"/>
</dbReference>
<dbReference type="EMBL" id="AF446369">
    <property type="protein sequence ID" value="AAL48240.1"/>
    <property type="molecule type" value="mRNA"/>
</dbReference>
<dbReference type="EMBL" id="BT000594">
    <property type="protein sequence ID" value="AAN18163.1"/>
    <property type="molecule type" value="mRNA"/>
</dbReference>
<dbReference type="EMBL" id="AK226224">
    <property type="protein sequence ID" value="BAE98388.1"/>
    <property type="molecule type" value="mRNA"/>
</dbReference>
<dbReference type="PIR" id="T05253">
    <property type="entry name" value="T05253"/>
</dbReference>
<dbReference type="RefSeq" id="NP_193120.1">
    <property type="nucleotide sequence ID" value="NM_117458.4"/>
</dbReference>
<dbReference type="SMR" id="Q9SVM9"/>
<dbReference type="BioGRID" id="12315">
    <property type="interactions" value="4"/>
</dbReference>
<dbReference type="FunCoup" id="Q9SVM9">
    <property type="interactions" value="519"/>
</dbReference>
<dbReference type="STRING" id="3702.Q9SVM9"/>
<dbReference type="iPTMnet" id="Q9SVM9"/>
<dbReference type="PaxDb" id="3702-AT4G13840.1"/>
<dbReference type="ProteomicsDB" id="220609"/>
<dbReference type="EnsemblPlants" id="AT4G13840.1">
    <property type="protein sequence ID" value="AT4G13840.1"/>
    <property type="gene ID" value="AT4G13840"/>
</dbReference>
<dbReference type="GeneID" id="827018"/>
<dbReference type="Gramene" id="AT4G13840.1">
    <property type="protein sequence ID" value="AT4G13840.1"/>
    <property type="gene ID" value="AT4G13840"/>
</dbReference>
<dbReference type="KEGG" id="ath:AT4G13840"/>
<dbReference type="Araport" id="AT4G13840"/>
<dbReference type="TAIR" id="AT4G13840">
    <property type="gene designation" value="CER26"/>
</dbReference>
<dbReference type="eggNOG" id="ENOG502QQYP">
    <property type="taxonomic scope" value="Eukaryota"/>
</dbReference>
<dbReference type="HOGENOM" id="CLU_049517_0_0_1"/>
<dbReference type="InParanoid" id="Q9SVM9"/>
<dbReference type="OMA" id="WVTANNC"/>
<dbReference type="OrthoDB" id="1862401at2759"/>
<dbReference type="PhylomeDB" id="Q9SVM9"/>
<dbReference type="BRENDA" id="2.3.1.199">
    <property type="organism ID" value="399"/>
</dbReference>
<dbReference type="PRO" id="PR:Q9SVM9"/>
<dbReference type="Proteomes" id="UP000006548">
    <property type="component" value="Chromosome 4"/>
</dbReference>
<dbReference type="ExpressionAtlas" id="Q9SVM9">
    <property type="expression patterns" value="baseline and differential"/>
</dbReference>
<dbReference type="GO" id="GO:0005829">
    <property type="term" value="C:cytosol"/>
    <property type="evidence" value="ECO:0000314"/>
    <property type="project" value="UniProtKB"/>
</dbReference>
<dbReference type="GO" id="GO:0071555">
    <property type="term" value="P:cell wall organization"/>
    <property type="evidence" value="ECO:0007669"/>
    <property type="project" value="UniProtKB-KW"/>
</dbReference>
<dbReference type="GO" id="GO:0042761">
    <property type="term" value="P:very long-chain fatty acid biosynthetic process"/>
    <property type="evidence" value="ECO:0000315"/>
    <property type="project" value="UniProtKB"/>
</dbReference>
<dbReference type="GO" id="GO:0010025">
    <property type="term" value="P:wax biosynthetic process"/>
    <property type="evidence" value="ECO:0000315"/>
    <property type="project" value="UniProtKB"/>
</dbReference>
<dbReference type="FunFam" id="3.30.559.10:FF:000092">
    <property type="entry name" value="Protein ECERIFERUM 26-like"/>
    <property type="match status" value="1"/>
</dbReference>
<dbReference type="Gene3D" id="3.30.559.10">
    <property type="entry name" value="Chloramphenicol acetyltransferase-like domain"/>
    <property type="match status" value="2"/>
</dbReference>
<dbReference type="InterPro" id="IPR023213">
    <property type="entry name" value="CAT-like_dom_sf"/>
</dbReference>
<dbReference type="InterPro" id="IPR050317">
    <property type="entry name" value="Plant_Fungal_Acyltransferase"/>
</dbReference>
<dbReference type="PANTHER" id="PTHR31642:SF334">
    <property type="entry name" value="PROTEIN ECERIFERUM 26"/>
    <property type="match status" value="1"/>
</dbReference>
<dbReference type="PANTHER" id="PTHR31642">
    <property type="entry name" value="TRICHOTHECENE 3-O-ACETYLTRANSFERASE"/>
    <property type="match status" value="1"/>
</dbReference>
<dbReference type="Pfam" id="PF02458">
    <property type="entry name" value="Transferase"/>
    <property type="match status" value="1"/>
</dbReference>
<name>CER26_ARATH</name>
<proteinExistence type="evidence at transcript level"/>
<feature type="chain" id="PRO_0000424433" description="Protein ECERIFERUM 26">
    <location>
        <begin position="1"/>
        <end position="428"/>
    </location>
</feature>
<feature type="region of interest" description="Disordered" evidence="1">
    <location>
        <begin position="1"/>
        <end position="36"/>
    </location>
</feature>
<feature type="compositionally biased region" description="Low complexity" evidence="1">
    <location>
        <begin position="21"/>
        <end position="36"/>
    </location>
</feature>
<sequence length="428" mass="47455">MGRSQEQGQGQGPVHSIRLSTVGATRPTETGTTHEPTGLDLAMKLHYLKAAYIYSAETARDLTVRHLKEAMFMLFDQIAWTTGRFSRRDSGRPYIKCNDCGTRFVEGQCNLTVEEWLSKPDRSVDEFLVYHHPIGPELTFSPLIYVQMTRFKCGGLGLGLSWANIIGDAFSLFYAFNLWAKAITGEKIYAPTTPSIGERRFQSPNPTVKDPVSIKRVEPVGDLWVTPNDKKLANYCFNLSVADQISPHFPAKGDDSIPVFEILAGIIWKCIAKVRVEPKPVTVTIIKKDPNDLKLNAIRNSQVISSVSVDFPVAEATVEELVKAMGEAKDERCGIEEIGESCDGNLDFVVYGAKLTFLDLTGEDLYEAKVMGKSPESVYCNVEGIGEEGLVVVYAAAKSEERVVTVTLPEEEMERVKLEFKKFGLIAP</sequence>
<comment type="function">
    <text evidence="2 3">Involved in biosynthesis of the epicuticular wax. Plays a role in very-long-chain fatty acid (VLCFA) biosynthesis and is required for C30 fatty acid elongation in leaf. Despite its classification as a BAHD acyltransferase based on sequence homology, CER26 does not seem to share the catalytic mechanism of the members of the BAHD family.</text>
</comment>
<comment type="subcellular location">
    <subcellularLocation>
        <location evidence="3">Cytoplasm</location>
        <location evidence="3">Cytosol</location>
    </subcellularLocation>
</comment>
<comment type="tissue specificity">
    <text evidence="2 3">Highly expressed in leaves.</text>
</comment>
<comment type="disruption phenotype">
    <text evidence="2 3">No visible phenotype under normal growth conditions, but mutant plants have increased levels of C29 alkane and reduced levels of C31 alkane in the rosette leaf wax.</text>
</comment>
<comment type="similarity">
    <text evidence="4">Belongs to the plant acyltransferase family.</text>
</comment>
<accession>Q9SVM9</accession>